<keyword id="KW-0963">Cytoplasm</keyword>
<keyword id="KW-0413">Isomerase</keyword>
<keyword id="KW-0464">Manganese</keyword>
<keyword id="KW-0479">Metal-binding</keyword>
<proteinExistence type="inferred from homology"/>
<organism>
    <name type="scientific">Listeria monocytogenes serotype 4a (strain HCC23)</name>
    <dbReference type="NCBI Taxonomy" id="552536"/>
    <lineage>
        <taxon>Bacteria</taxon>
        <taxon>Bacillati</taxon>
        <taxon>Bacillota</taxon>
        <taxon>Bacilli</taxon>
        <taxon>Bacillales</taxon>
        <taxon>Listeriaceae</taxon>
        <taxon>Listeria</taxon>
    </lineage>
</organism>
<dbReference type="EC" id="5.4.2.7" evidence="1"/>
<dbReference type="EMBL" id="CP001175">
    <property type="protein sequence ID" value="ACK38958.1"/>
    <property type="molecule type" value="Genomic_DNA"/>
</dbReference>
<dbReference type="RefSeq" id="WP_012581051.1">
    <property type="nucleotide sequence ID" value="NC_011660.1"/>
</dbReference>
<dbReference type="SMR" id="B8DBX2"/>
<dbReference type="KEGG" id="lmh:LMHCC_0602"/>
<dbReference type="HOGENOM" id="CLU_053861_0_0_9"/>
<dbReference type="UniPathway" id="UPA00002">
    <property type="reaction ID" value="UER00467"/>
</dbReference>
<dbReference type="GO" id="GO:0005829">
    <property type="term" value="C:cytosol"/>
    <property type="evidence" value="ECO:0007669"/>
    <property type="project" value="TreeGrafter"/>
</dbReference>
<dbReference type="GO" id="GO:0000287">
    <property type="term" value="F:magnesium ion binding"/>
    <property type="evidence" value="ECO:0007669"/>
    <property type="project" value="InterPro"/>
</dbReference>
<dbReference type="GO" id="GO:0030145">
    <property type="term" value="F:manganese ion binding"/>
    <property type="evidence" value="ECO:0007669"/>
    <property type="project" value="UniProtKB-UniRule"/>
</dbReference>
<dbReference type="GO" id="GO:0008973">
    <property type="term" value="F:phosphopentomutase activity"/>
    <property type="evidence" value="ECO:0007669"/>
    <property type="project" value="UniProtKB-UniRule"/>
</dbReference>
<dbReference type="GO" id="GO:0006018">
    <property type="term" value="P:2-deoxyribose 1-phosphate catabolic process"/>
    <property type="evidence" value="ECO:0007669"/>
    <property type="project" value="UniProtKB-UniRule"/>
</dbReference>
<dbReference type="GO" id="GO:0006015">
    <property type="term" value="P:5-phosphoribose 1-diphosphate biosynthetic process"/>
    <property type="evidence" value="ECO:0007669"/>
    <property type="project" value="UniProtKB-UniPathway"/>
</dbReference>
<dbReference type="GO" id="GO:0043094">
    <property type="term" value="P:metabolic compound salvage"/>
    <property type="evidence" value="ECO:0007669"/>
    <property type="project" value="InterPro"/>
</dbReference>
<dbReference type="GO" id="GO:0009117">
    <property type="term" value="P:nucleotide metabolic process"/>
    <property type="evidence" value="ECO:0007669"/>
    <property type="project" value="InterPro"/>
</dbReference>
<dbReference type="CDD" id="cd16009">
    <property type="entry name" value="PPM"/>
    <property type="match status" value="1"/>
</dbReference>
<dbReference type="FunFam" id="3.30.70.1250:FF:000001">
    <property type="entry name" value="Phosphopentomutase"/>
    <property type="match status" value="1"/>
</dbReference>
<dbReference type="Gene3D" id="3.40.720.10">
    <property type="entry name" value="Alkaline Phosphatase, subunit A"/>
    <property type="match status" value="1"/>
</dbReference>
<dbReference type="Gene3D" id="3.30.70.1250">
    <property type="entry name" value="Phosphopentomutase"/>
    <property type="match status" value="1"/>
</dbReference>
<dbReference type="HAMAP" id="MF_00740">
    <property type="entry name" value="Phosphopentomut"/>
    <property type="match status" value="1"/>
</dbReference>
<dbReference type="InterPro" id="IPR017850">
    <property type="entry name" value="Alkaline_phosphatase_core_sf"/>
</dbReference>
<dbReference type="InterPro" id="IPR010045">
    <property type="entry name" value="DeoB"/>
</dbReference>
<dbReference type="InterPro" id="IPR006124">
    <property type="entry name" value="Metalloenzyme"/>
</dbReference>
<dbReference type="InterPro" id="IPR024052">
    <property type="entry name" value="Phosphopentomutase_DeoB_cap_sf"/>
</dbReference>
<dbReference type="NCBIfam" id="TIGR01696">
    <property type="entry name" value="deoB"/>
    <property type="match status" value="1"/>
</dbReference>
<dbReference type="NCBIfam" id="NF003766">
    <property type="entry name" value="PRK05362.1"/>
    <property type="match status" value="1"/>
</dbReference>
<dbReference type="PANTHER" id="PTHR21110">
    <property type="entry name" value="PHOSPHOPENTOMUTASE"/>
    <property type="match status" value="1"/>
</dbReference>
<dbReference type="PANTHER" id="PTHR21110:SF0">
    <property type="entry name" value="PHOSPHOPENTOMUTASE"/>
    <property type="match status" value="1"/>
</dbReference>
<dbReference type="Pfam" id="PF01676">
    <property type="entry name" value="Metalloenzyme"/>
    <property type="match status" value="1"/>
</dbReference>
<dbReference type="PIRSF" id="PIRSF001491">
    <property type="entry name" value="Ppentomutase"/>
    <property type="match status" value="1"/>
</dbReference>
<dbReference type="SUPFAM" id="SSF53649">
    <property type="entry name" value="Alkaline phosphatase-like"/>
    <property type="match status" value="1"/>
</dbReference>
<dbReference type="SUPFAM" id="SSF143856">
    <property type="entry name" value="DeoB insert domain-like"/>
    <property type="match status" value="1"/>
</dbReference>
<gene>
    <name evidence="1" type="primary">deoB</name>
    <name type="ordered locus">LMHCC_0602</name>
</gene>
<sequence>MPDKFKRVHVIVMDSVGIGEAPDAAKFGDFDVDTFGHIAKHVGGLKMPEMGKLGLSNIREIDGIKKAEKPLAYYTKMQEASNGKDTMTGHWEIMGLYIDTPFRVFPDGFPDDLINQIEEKTGRKVIGNKPASGTEIMAELGEEHVKTGALIVYTSADSVLQIAAHEDVVPLEELYEICEFCREITLDDPYMLGRIIARPFVGEPGAFVRTPNRHDYALKPFKPTVMDALKDGGKDVIAIGKISDIFDGEGVTESIRTKSNMDGMDQFIAVLDKDFNGMSFLNLVDFDALFGHRRDPQGYADALVDFDGRLVEVMEKLTDDDLLIITADHGNDPTYSGTDHTREFVPLLVYSPRFKNGGSELELRKTFADLGATVADNFEVKMPEYGTSFLKDLK</sequence>
<feature type="chain" id="PRO_1000148245" description="Phosphopentomutase">
    <location>
        <begin position="1"/>
        <end position="394"/>
    </location>
</feature>
<feature type="binding site" evidence="1">
    <location>
        <position position="14"/>
    </location>
    <ligand>
        <name>Mn(2+)</name>
        <dbReference type="ChEBI" id="CHEBI:29035"/>
        <label>1</label>
    </ligand>
</feature>
<feature type="binding site" evidence="1">
    <location>
        <position position="287"/>
    </location>
    <ligand>
        <name>Mn(2+)</name>
        <dbReference type="ChEBI" id="CHEBI:29035"/>
        <label>2</label>
    </ligand>
</feature>
<feature type="binding site" evidence="1">
    <location>
        <position position="292"/>
    </location>
    <ligand>
        <name>Mn(2+)</name>
        <dbReference type="ChEBI" id="CHEBI:29035"/>
        <label>2</label>
    </ligand>
</feature>
<feature type="binding site" evidence="1">
    <location>
        <position position="328"/>
    </location>
    <ligand>
        <name>Mn(2+)</name>
        <dbReference type="ChEBI" id="CHEBI:29035"/>
        <label>1</label>
    </ligand>
</feature>
<feature type="binding site" evidence="1">
    <location>
        <position position="329"/>
    </location>
    <ligand>
        <name>Mn(2+)</name>
        <dbReference type="ChEBI" id="CHEBI:29035"/>
        <label>1</label>
    </ligand>
</feature>
<feature type="binding site" evidence="1">
    <location>
        <position position="340"/>
    </location>
    <ligand>
        <name>Mn(2+)</name>
        <dbReference type="ChEBI" id="CHEBI:29035"/>
        <label>2</label>
    </ligand>
</feature>
<reference key="1">
    <citation type="journal article" date="2011" name="J. Bacteriol.">
        <title>Genome sequence of lineage III Listeria monocytogenes strain HCC23.</title>
        <authorList>
            <person name="Steele C.L."/>
            <person name="Donaldson J.R."/>
            <person name="Paul D."/>
            <person name="Banes M.M."/>
            <person name="Arick T."/>
            <person name="Bridges S.M."/>
            <person name="Lawrence M.L."/>
        </authorList>
    </citation>
    <scope>NUCLEOTIDE SEQUENCE [LARGE SCALE GENOMIC DNA]</scope>
    <source>
        <strain>HCC23</strain>
    </source>
</reference>
<accession>B8DBX2</accession>
<evidence type="ECO:0000255" key="1">
    <source>
        <dbReference type="HAMAP-Rule" id="MF_00740"/>
    </source>
</evidence>
<comment type="function">
    <text evidence="1">Isomerase that catalyzes the conversion of deoxy-ribose 1-phosphate (dRib-1-P) and ribose 1-phosphate (Rib-1-P) to deoxy-ribose 5-phosphate (dRib-5-P) and ribose 5-phosphate (Rib-5-P), respectively.</text>
</comment>
<comment type="catalytic activity">
    <reaction evidence="1">
        <text>2-deoxy-alpha-D-ribose 1-phosphate = 2-deoxy-D-ribose 5-phosphate</text>
        <dbReference type="Rhea" id="RHEA:27658"/>
        <dbReference type="ChEBI" id="CHEBI:57259"/>
        <dbReference type="ChEBI" id="CHEBI:62877"/>
        <dbReference type="EC" id="5.4.2.7"/>
    </reaction>
</comment>
<comment type="catalytic activity">
    <reaction evidence="1">
        <text>alpha-D-ribose 1-phosphate = D-ribose 5-phosphate</text>
        <dbReference type="Rhea" id="RHEA:18793"/>
        <dbReference type="ChEBI" id="CHEBI:57720"/>
        <dbReference type="ChEBI" id="CHEBI:78346"/>
        <dbReference type="EC" id="5.4.2.7"/>
    </reaction>
</comment>
<comment type="cofactor">
    <cofactor evidence="1">
        <name>Mn(2+)</name>
        <dbReference type="ChEBI" id="CHEBI:29035"/>
    </cofactor>
    <text evidence="1">Binds 2 manganese ions.</text>
</comment>
<comment type="pathway">
    <text evidence="1">Carbohydrate degradation; 2-deoxy-D-ribose 1-phosphate degradation; D-glyceraldehyde 3-phosphate and acetaldehyde from 2-deoxy-alpha-D-ribose 1-phosphate: step 1/2.</text>
</comment>
<comment type="subcellular location">
    <subcellularLocation>
        <location evidence="1">Cytoplasm</location>
    </subcellularLocation>
</comment>
<comment type="similarity">
    <text evidence="1">Belongs to the phosphopentomutase family.</text>
</comment>
<protein>
    <recommendedName>
        <fullName evidence="1">Phosphopentomutase</fullName>
        <ecNumber evidence="1">5.4.2.7</ecNumber>
    </recommendedName>
    <alternativeName>
        <fullName evidence="1">Phosphodeoxyribomutase</fullName>
    </alternativeName>
</protein>
<name>DEOB_LISMH</name>